<sequence>MSDENLLTTLDTYLASGIHIGTQQKTEDMRRFIYRVRADGLYVLDVRKTDERLRLAAKFLSNYEPEDIMAVTRRVYSVGPLKKFGQVTGINTVAGRFVPGTLTNPSAKKFAEPEVLFLSDPRVDKQALKEAIEIGIPVVGMCDTEHLTAHIDFIIPTNNKGRKSVSLMYYLIAREYMKNRGLIGEEVPFSYDDFLEKAMNVKVKMNTAPRQRGRFQRRPRR</sequence>
<name>RS2_METM6</name>
<reference key="1">
    <citation type="submission" date="2007-10" db="EMBL/GenBank/DDBJ databases">
        <title>Complete sequence of Methanococcus maripaludis C6.</title>
        <authorList>
            <consortium name="US DOE Joint Genome Institute"/>
            <person name="Copeland A."/>
            <person name="Lucas S."/>
            <person name="Lapidus A."/>
            <person name="Barry K."/>
            <person name="Glavina del Rio T."/>
            <person name="Dalin E."/>
            <person name="Tice H."/>
            <person name="Pitluck S."/>
            <person name="Clum A."/>
            <person name="Schmutz J."/>
            <person name="Larimer F."/>
            <person name="Land M."/>
            <person name="Hauser L."/>
            <person name="Kyrpides N."/>
            <person name="Mikhailova N."/>
            <person name="Sieprawska-Lupa M."/>
            <person name="Whitman W.B."/>
            <person name="Richardson P."/>
        </authorList>
    </citation>
    <scope>NUCLEOTIDE SEQUENCE [LARGE SCALE GENOMIC DNA]</scope>
    <source>
        <strain>C6 / ATCC BAA-1332</strain>
    </source>
</reference>
<comment type="similarity">
    <text evidence="1">Belongs to the universal ribosomal protein uS2 family.</text>
</comment>
<gene>
    <name evidence="1" type="primary">rps2</name>
    <name type="ordered locus">MmarC6_0219</name>
</gene>
<feature type="chain" id="PRO_0000352064" description="Small ribosomal subunit protein uS2">
    <location>
        <begin position="1"/>
        <end position="221"/>
    </location>
</feature>
<keyword id="KW-0687">Ribonucleoprotein</keyword>
<keyword id="KW-0689">Ribosomal protein</keyword>
<accession>A9A7B6</accession>
<organism>
    <name type="scientific">Methanococcus maripaludis (strain C6 / ATCC BAA-1332)</name>
    <dbReference type="NCBI Taxonomy" id="444158"/>
    <lineage>
        <taxon>Archaea</taxon>
        <taxon>Methanobacteriati</taxon>
        <taxon>Methanobacteriota</taxon>
        <taxon>Methanomada group</taxon>
        <taxon>Methanococci</taxon>
        <taxon>Methanococcales</taxon>
        <taxon>Methanococcaceae</taxon>
        <taxon>Methanococcus</taxon>
    </lineage>
</organism>
<dbReference type="EMBL" id="CP000867">
    <property type="protein sequence ID" value="ABX01040.1"/>
    <property type="molecule type" value="Genomic_DNA"/>
</dbReference>
<dbReference type="SMR" id="A9A7B6"/>
<dbReference type="STRING" id="444158.MmarC6_0219"/>
<dbReference type="KEGG" id="mmx:MmarC6_0219"/>
<dbReference type="eggNOG" id="arCOG04245">
    <property type="taxonomic scope" value="Archaea"/>
</dbReference>
<dbReference type="HOGENOM" id="CLU_058171_3_0_2"/>
<dbReference type="OrthoDB" id="371797at2157"/>
<dbReference type="PhylomeDB" id="A9A7B6"/>
<dbReference type="GO" id="GO:0015935">
    <property type="term" value="C:small ribosomal subunit"/>
    <property type="evidence" value="ECO:0007669"/>
    <property type="project" value="InterPro"/>
</dbReference>
<dbReference type="GO" id="GO:0003735">
    <property type="term" value="F:structural constituent of ribosome"/>
    <property type="evidence" value="ECO:0007669"/>
    <property type="project" value="InterPro"/>
</dbReference>
<dbReference type="GO" id="GO:0006412">
    <property type="term" value="P:translation"/>
    <property type="evidence" value="ECO:0007669"/>
    <property type="project" value="UniProtKB-UniRule"/>
</dbReference>
<dbReference type="CDD" id="cd01425">
    <property type="entry name" value="RPS2"/>
    <property type="match status" value="1"/>
</dbReference>
<dbReference type="FunFam" id="3.40.50.10490:FF:000030">
    <property type="entry name" value="30S ribosomal protein S2"/>
    <property type="match status" value="1"/>
</dbReference>
<dbReference type="Gene3D" id="3.40.50.10490">
    <property type="entry name" value="Glucose-6-phosphate isomerase like protein, domain 1"/>
    <property type="match status" value="1"/>
</dbReference>
<dbReference type="HAMAP" id="MF_00291_A">
    <property type="entry name" value="Ribosomal_uS2_A"/>
    <property type="match status" value="1"/>
</dbReference>
<dbReference type="InterPro" id="IPR001865">
    <property type="entry name" value="Ribosomal_uS2"/>
</dbReference>
<dbReference type="InterPro" id="IPR023454">
    <property type="entry name" value="Ribosomal_uS2_arc"/>
</dbReference>
<dbReference type="InterPro" id="IPR018130">
    <property type="entry name" value="Ribosomal_uS2_CS"/>
</dbReference>
<dbReference type="InterPro" id="IPR005707">
    <property type="entry name" value="Ribosomal_uS2_euk/arc"/>
</dbReference>
<dbReference type="InterPro" id="IPR023591">
    <property type="entry name" value="Ribosomal_uS2_flav_dom_sf"/>
</dbReference>
<dbReference type="NCBIfam" id="TIGR01012">
    <property type="entry name" value="uS2_euk_arch"/>
    <property type="match status" value="1"/>
</dbReference>
<dbReference type="PANTHER" id="PTHR11489">
    <property type="entry name" value="40S RIBOSOMAL PROTEIN SA"/>
    <property type="match status" value="1"/>
</dbReference>
<dbReference type="Pfam" id="PF00318">
    <property type="entry name" value="Ribosomal_S2"/>
    <property type="match status" value="2"/>
</dbReference>
<dbReference type="PRINTS" id="PR00395">
    <property type="entry name" value="RIBOSOMALS2"/>
</dbReference>
<dbReference type="SUPFAM" id="SSF52313">
    <property type="entry name" value="Ribosomal protein S2"/>
    <property type="match status" value="1"/>
</dbReference>
<dbReference type="PROSITE" id="PS00963">
    <property type="entry name" value="RIBOSOMAL_S2_2"/>
    <property type="match status" value="1"/>
</dbReference>
<proteinExistence type="inferred from homology"/>
<protein>
    <recommendedName>
        <fullName evidence="1">Small ribosomal subunit protein uS2</fullName>
    </recommendedName>
    <alternativeName>
        <fullName evidence="2">30S ribosomal protein S2</fullName>
    </alternativeName>
</protein>
<evidence type="ECO:0000255" key="1">
    <source>
        <dbReference type="HAMAP-Rule" id="MF_00291"/>
    </source>
</evidence>
<evidence type="ECO:0000305" key="2"/>